<protein>
    <recommendedName>
        <fullName evidence="1">6,7-dimethyl-8-ribityllumazine synthase</fullName>
        <shortName evidence="1">DMRL synthase</shortName>
        <shortName evidence="1">LS</shortName>
        <shortName evidence="1">Lumazine synthase</shortName>
        <ecNumber evidence="1">2.5.1.78</ecNumber>
    </recommendedName>
</protein>
<dbReference type="EC" id="2.5.1.78" evidence="1"/>
<dbReference type="EMBL" id="AM406670">
    <property type="protein sequence ID" value="CAL92935.1"/>
    <property type="molecule type" value="Genomic_DNA"/>
</dbReference>
<dbReference type="RefSeq" id="WP_011764053.1">
    <property type="nucleotide sequence ID" value="NC_008702.1"/>
</dbReference>
<dbReference type="SMR" id="A1K280"/>
<dbReference type="STRING" id="62928.azo0318"/>
<dbReference type="KEGG" id="aoa:dqs_0331"/>
<dbReference type="KEGG" id="azo:azo0318"/>
<dbReference type="eggNOG" id="COG0054">
    <property type="taxonomic scope" value="Bacteria"/>
</dbReference>
<dbReference type="HOGENOM" id="CLU_089358_1_2_4"/>
<dbReference type="OrthoDB" id="9809709at2"/>
<dbReference type="UniPathway" id="UPA00275">
    <property type="reaction ID" value="UER00404"/>
</dbReference>
<dbReference type="Proteomes" id="UP000002588">
    <property type="component" value="Chromosome"/>
</dbReference>
<dbReference type="GO" id="GO:0005829">
    <property type="term" value="C:cytosol"/>
    <property type="evidence" value="ECO:0007669"/>
    <property type="project" value="TreeGrafter"/>
</dbReference>
<dbReference type="GO" id="GO:0009349">
    <property type="term" value="C:riboflavin synthase complex"/>
    <property type="evidence" value="ECO:0007669"/>
    <property type="project" value="InterPro"/>
</dbReference>
<dbReference type="GO" id="GO:0000906">
    <property type="term" value="F:6,7-dimethyl-8-ribityllumazine synthase activity"/>
    <property type="evidence" value="ECO:0007669"/>
    <property type="project" value="UniProtKB-UniRule"/>
</dbReference>
<dbReference type="GO" id="GO:0009231">
    <property type="term" value="P:riboflavin biosynthetic process"/>
    <property type="evidence" value="ECO:0007669"/>
    <property type="project" value="UniProtKB-UniRule"/>
</dbReference>
<dbReference type="CDD" id="cd09209">
    <property type="entry name" value="Lumazine_synthase-I"/>
    <property type="match status" value="1"/>
</dbReference>
<dbReference type="Gene3D" id="3.40.50.960">
    <property type="entry name" value="Lumazine/riboflavin synthase"/>
    <property type="match status" value="1"/>
</dbReference>
<dbReference type="HAMAP" id="MF_00178">
    <property type="entry name" value="Lumazine_synth"/>
    <property type="match status" value="1"/>
</dbReference>
<dbReference type="InterPro" id="IPR034964">
    <property type="entry name" value="LS"/>
</dbReference>
<dbReference type="InterPro" id="IPR002180">
    <property type="entry name" value="LS/RS"/>
</dbReference>
<dbReference type="InterPro" id="IPR036467">
    <property type="entry name" value="LS/RS_sf"/>
</dbReference>
<dbReference type="NCBIfam" id="TIGR00114">
    <property type="entry name" value="lumazine-synth"/>
    <property type="match status" value="1"/>
</dbReference>
<dbReference type="PANTHER" id="PTHR21058:SF0">
    <property type="entry name" value="6,7-DIMETHYL-8-RIBITYLLUMAZINE SYNTHASE"/>
    <property type="match status" value="1"/>
</dbReference>
<dbReference type="PANTHER" id="PTHR21058">
    <property type="entry name" value="6,7-DIMETHYL-8-RIBITYLLUMAZINE SYNTHASE DMRL SYNTHASE LUMAZINE SYNTHASE"/>
    <property type="match status" value="1"/>
</dbReference>
<dbReference type="Pfam" id="PF00885">
    <property type="entry name" value="DMRL_synthase"/>
    <property type="match status" value="1"/>
</dbReference>
<dbReference type="SUPFAM" id="SSF52121">
    <property type="entry name" value="Lumazine synthase"/>
    <property type="match status" value="1"/>
</dbReference>
<reference key="1">
    <citation type="journal article" date="2006" name="Nat. Biotechnol.">
        <title>Complete genome of the mutualistic, N2-fixing grass endophyte Azoarcus sp. strain BH72.</title>
        <authorList>
            <person name="Krause A."/>
            <person name="Ramakumar A."/>
            <person name="Bartels D."/>
            <person name="Battistoni F."/>
            <person name="Bekel T."/>
            <person name="Boch J."/>
            <person name="Boehm M."/>
            <person name="Friedrich F."/>
            <person name="Hurek T."/>
            <person name="Krause L."/>
            <person name="Linke B."/>
            <person name="McHardy A.C."/>
            <person name="Sarkar A."/>
            <person name="Schneiker S."/>
            <person name="Syed A.A."/>
            <person name="Thauer R."/>
            <person name="Vorhoelter F.-J."/>
            <person name="Weidner S."/>
            <person name="Puehler A."/>
            <person name="Reinhold-Hurek B."/>
            <person name="Kaiser O."/>
            <person name="Goesmann A."/>
        </authorList>
    </citation>
    <scope>NUCLEOTIDE SEQUENCE [LARGE SCALE GENOMIC DNA]</scope>
    <source>
        <strain>BH72</strain>
    </source>
</reference>
<feature type="chain" id="PRO_1000040363" description="6,7-dimethyl-8-ribityllumazine synthase">
    <location>
        <begin position="1"/>
        <end position="156"/>
    </location>
</feature>
<feature type="active site" description="Proton donor" evidence="1">
    <location>
        <position position="94"/>
    </location>
</feature>
<feature type="binding site" evidence="1">
    <location>
        <position position="28"/>
    </location>
    <ligand>
        <name>5-amino-6-(D-ribitylamino)uracil</name>
        <dbReference type="ChEBI" id="CHEBI:15934"/>
    </ligand>
</feature>
<feature type="binding site" evidence="1">
    <location>
        <begin position="62"/>
        <end position="64"/>
    </location>
    <ligand>
        <name>5-amino-6-(D-ribitylamino)uracil</name>
        <dbReference type="ChEBI" id="CHEBI:15934"/>
    </ligand>
</feature>
<feature type="binding site" evidence="1">
    <location>
        <begin position="86"/>
        <end position="88"/>
    </location>
    <ligand>
        <name>5-amino-6-(D-ribitylamino)uracil</name>
        <dbReference type="ChEBI" id="CHEBI:15934"/>
    </ligand>
</feature>
<feature type="binding site" evidence="1">
    <location>
        <begin position="91"/>
        <end position="92"/>
    </location>
    <ligand>
        <name>(2S)-2-hydroxy-3-oxobutyl phosphate</name>
        <dbReference type="ChEBI" id="CHEBI:58830"/>
    </ligand>
</feature>
<feature type="binding site" evidence="1">
    <location>
        <position position="119"/>
    </location>
    <ligand>
        <name>5-amino-6-(D-ribitylamino)uracil</name>
        <dbReference type="ChEBI" id="CHEBI:15934"/>
    </ligand>
</feature>
<feature type="binding site" evidence="1">
    <location>
        <position position="133"/>
    </location>
    <ligand>
        <name>(2S)-2-hydroxy-3-oxobutyl phosphate</name>
        <dbReference type="ChEBI" id="CHEBI:58830"/>
    </ligand>
</feature>
<gene>
    <name evidence="1" type="primary">ribH</name>
    <name type="ordered locus">azo0318</name>
</gene>
<proteinExistence type="inferred from homology"/>
<sequence length="156" mass="16722">MARYDNIAEFESDLNGKGLRVGIVMSRFNQDVCEGLLSACTEELQKLGVSPELIRIATVPGALEIPLVLQKMGQSGKFDALIALGAVIRGETYHFELVSNEMGAGITRIGLDTGIPIANGVLTTEDDDQALARMQEKGSDCARAAVEMANLLKVLQ</sequence>
<comment type="function">
    <text evidence="1">Catalyzes the formation of 6,7-dimethyl-8-ribityllumazine by condensation of 5-amino-6-(D-ribitylamino)uracil with 3,4-dihydroxy-2-butanone 4-phosphate. This is the penultimate step in the biosynthesis of riboflavin.</text>
</comment>
<comment type="catalytic activity">
    <reaction evidence="1">
        <text>(2S)-2-hydroxy-3-oxobutyl phosphate + 5-amino-6-(D-ribitylamino)uracil = 6,7-dimethyl-8-(1-D-ribityl)lumazine + phosphate + 2 H2O + H(+)</text>
        <dbReference type="Rhea" id="RHEA:26152"/>
        <dbReference type="ChEBI" id="CHEBI:15377"/>
        <dbReference type="ChEBI" id="CHEBI:15378"/>
        <dbReference type="ChEBI" id="CHEBI:15934"/>
        <dbReference type="ChEBI" id="CHEBI:43474"/>
        <dbReference type="ChEBI" id="CHEBI:58201"/>
        <dbReference type="ChEBI" id="CHEBI:58830"/>
        <dbReference type="EC" id="2.5.1.78"/>
    </reaction>
</comment>
<comment type="pathway">
    <text evidence="1">Cofactor biosynthesis; riboflavin biosynthesis; riboflavin from 2-hydroxy-3-oxobutyl phosphate and 5-amino-6-(D-ribitylamino)uracil: step 1/2.</text>
</comment>
<comment type="similarity">
    <text evidence="1">Belongs to the DMRL synthase family.</text>
</comment>
<evidence type="ECO:0000255" key="1">
    <source>
        <dbReference type="HAMAP-Rule" id="MF_00178"/>
    </source>
</evidence>
<accession>A1K280</accession>
<organism>
    <name type="scientific">Azoarcus sp. (strain BH72)</name>
    <dbReference type="NCBI Taxonomy" id="418699"/>
    <lineage>
        <taxon>Bacteria</taxon>
        <taxon>Pseudomonadati</taxon>
        <taxon>Pseudomonadota</taxon>
        <taxon>Betaproteobacteria</taxon>
        <taxon>Rhodocyclales</taxon>
        <taxon>Zoogloeaceae</taxon>
        <taxon>Azoarcus</taxon>
    </lineage>
</organism>
<name>RISB_AZOSB</name>
<keyword id="KW-1185">Reference proteome</keyword>
<keyword id="KW-0686">Riboflavin biosynthesis</keyword>
<keyword id="KW-0808">Transferase</keyword>